<proteinExistence type="inferred from homology"/>
<gene>
    <name type="primary">rpcA</name>
    <name type="synonym">cpcA</name>
    <name type="ordered locus">SynWH7803_0479</name>
</gene>
<keyword id="KW-0042">Antenna complex</keyword>
<keyword id="KW-0089">Bile pigment</keyword>
<keyword id="KW-0157">Chromophore</keyword>
<keyword id="KW-0249">Electron transport</keyword>
<keyword id="KW-0472">Membrane</keyword>
<keyword id="KW-0602">Photosynthesis</keyword>
<keyword id="KW-0605">Phycobilisome</keyword>
<keyword id="KW-1185">Reference proteome</keyword>
<keyword id="KW-0793">Thylakoid</keyword>
<keyword id="KW-0813">Transport</keyword>
<comment type="function">
    <text>Light-harvesting photosynthetic bile pigment-protein from the phycobiliprotein complex (phycobilisome, PBS). Phycocyanin is the major phycobiliprotein in the PBS rod.</text>
</comment>
<comment type="subunit">
    <text evidence="2">Heterodimer of an alpha and a beta subunit, which further assembles into trimers and the trimers into hexamers.</text>
</comment>
<comment type="subcellular location">
    <subcellularLocation>
        <location evidence="1">Cellular thylakoid membrane</location>
        <topology evidence="1">Peripheral membrane protein</topology>
        <orientation evidence="1">Cytoplasmic side</orientation>
    </subcellularLocation>
    <text evidence="1">Part of the phycobilisome rod.</text>
</comment>
<comment type="PTM">
    <text evidence="1 2">Contains one covalently linked bilin chromophore.</text>
</comment>
<comment type="similarity">
    <text evidence="3">Belongs to the phycobiliprotein family.</text>
</comment>
<sequence>MKTPLTEAVSAADSQGRFLSSTEVQAASGRFNRAAASLEAAKALSAKADALVNGAAQAVYNKFPYTTQMEGSNYSTTPEGKAKCSRDVGYYLRMITYCLVAGGTGPMDDYLIAGLDEINRTFELSPSWYVEALKYIKSNHGLSGDAATEANSYIDYAINALI</sequence>
<name>PHCA_SYNPW</name>
<accession>P27288</accession>
<accession>A5GIZ0</accession>
<reference key="1">
    <citation type="journal article" date="1991" name="Plant Mol. Biol.">
        <title>Cloning and sequence analysis of the phycocyanin genes of the marine cyanobacterium Synechococcus sp. WH7803.</title>
        <authorList>
            <person name="Wilson W.H."/>
            <person name="Newman J."/>
            <person name="Mann N.H."/>
            <person name="Carr N.G."/>
        </authorList>
    </citation>
    <scope>NUCLEOTIDE SEQUENCE [GENOMIC DNA]</scope>
</reference>
<reference key="2">
    <citation type="submission" date="2006-05" db="EMBL/GenBank/DDBJ databases">
        <authorList>
            <consortium name="Genoscope"/>
        </authorList>
    </citation>
    <scope>NUCLEOTIDE SEQUENCE [LARGE SCALE GENOMIC DNA]</scope>
    <source>
        <strain>WH7803</strain>
    </source>
</reference>
<feature type="initiator methionine" description="Removed" evidence="1">
    <location>
        <position position="1"/>
    </location>
</feature>
<feature type="chain" id="PRO_0000199137" description="R-phycocyanin alpha subunit">
    <location>
        <begin position="2"/>
        <end position="162"/>
    </location>
</feature>
<feature type="binding site" description="covalent" evidence="2">
    <location>
        <position position="84"/>
    </location>
    <ligand>
        <name>(2R,3E)-phycoerythrobilin</name>
        <dbReference type="ChEBI" id="CHEBI:85276"/>
    </ligand>
</feature>
<protein>
    <recommendedName>
        <fullName>R-phycocyanin alpha subunit</fullName>
    </recommendedName>
</protein>
<evidence type="ECO:0000250" key="1"/>
<evidence type="ECO:0000250" key="2">
    <source>
        <dbReference type="UniProtKB" id="P13530"/>
    </source>
</evidence>
<evidence type="ECO:0000305" key="3"/>
<dbReference type="EMBL" id="X59809">
    <property type="protein sequence ID" value="CAA42480.1"/>
    <property type="molecule type" value="Genomic_DNA"/>
</dbReference>
<dbReference type="EMBL" id="CT971583">
    <property type="protein sequence ID" value="CAK22905.1"/>
    <property type="molecule type" value="Genomic_DNA"/>
</dbReference>
<dbReference type="PIR" id="S17735">
    <property type="entry name" value="CFYCA3"/>
</dbReference>
<dbReference type="SMR" id="P27288"/>
<dbReference type="STRING" id="32051.SynWH7803_0479"/>
<dbReference type="KEGG" id="syx:SynWH7803_0479"/>
<dbReference type="eggNOG" id="ENOG502Z85C">
    <property type="taxonomic scope" value="Bacteria"/>
</dbReference>
<dbReference type="HOGENOM" id="CLU_104219_2_0_3"/>
<dbReference type="OrthoDB" id="466183at2"/>
<dbReference type="Proteomes" id="UP000001566">
    <property type="component" value="Chromosome"/>
</dbReference>
<dbReference type="GO" id="GO:0030089">
    <property type="term" value="C:phycobilisome"/>
    <property type="evidence" value="ECO:0007669"/>
    <property type="project" value="UniProtKB-KW"/>
</dbReference>
<dbReference type="GO" id="GO:0031676">
    <property type="term" value="C:plasma membrane-derived thylakoid membrane"/>
    <property type="evidence" value="ECO:0007669"/>
    <property type="project" value="UniProtKB-SubCell"/>
</dbReference>
<dbReference type="GO" id="GO:0015979">
    <property type="term" value="P:photosynthesis"/>
    <property type="evidence" value="ECO:0007669"/>
    <property type="project" value="UniProtKB-KW"/>
</dbReference>
<dbReference type="CDD" id="cd14770">
    <property type="entry name" value="PC-PEC_alpha"/>
    <property type="match status" value="1"/>
</dbReference>
<dbReference type="Gene3D" id="1.10.490.20">
    <property type="entry name" value="Phycocyanins"/>
    <property type="match status" value="1"/>
</dbReference>
<dbReference type="InterPro" id="IPR009050">
    <property type="entry name" value="Globin-like_sf"/>
</dbReference>
<dbReference type="InterPro" id="IPR012128">
    <property type="entry name" value="Phycobilisome_asu/bsu"/>
</dbReference>
<dbReference type="InterPro" id="IPR038719">
    <property type="entry name" value="Phycobilisome_asu/bsu_sf"/>
</dbReference>
<dbReference type="InterPro" id="IPR006246">
    <property type="entry name" value="Phycocyanin_a"/>
</dbReference>
<dbReference type="NCBIfam" id="TIGR01338">
    <property type="entry name" value="phycocy_alpha"/>
    <property type="match status" value="1"/>
</dbReference>
<dbReference type="PANTHER" id="PTHR34011:SF4">
    <property type="entry name" value="C-PHYCOCYANIN ALPHA SUBUNIT"/>
    <property type="match status" value="1"/>
</dbReference>
<dbReference type="PANTHER" id="PTHR34011">
    <property type="entry name" value="PHYCOBILISOME 32.1 KDA LINKER POLYPEPTIDE, PHYCOCYANIN-ASSOCIATED, ROD 2-RELATED"/>
    <property type="match status" value="1"/>
</dbReference>
<dbReference type="Pfam" id="PF00502">
    <property type="entry name" value="Phycobilisome"/>
    <property type="match status" value="1"/>
</dbReference>
<dbReference type="PIRSF" id="PIRSF000081">
    <property type="entry name" value="Phycocyanin"/>
    <property type="match status" value="1"/>
</dbReference>
<dbReference type="SUPFAM" id="SSF46458">
    <property type="entry name" value="Globin-like"/>
    <property type="match status" value="1"/>
</dbReference>
<organism>
    <name type="scientific">Synechococcus sp. (strain WH7803)</name>
    <dbReference type="NCBI Taxonomy" id="32051"/>
    <lineage>
        <taxon>Bacteria</taxon>
        <taxon>Bacillati</taxon>
        <taxon>Cyanobacteriota</taxon>
        <taxon>Cyanophyceae</taxon>
        <taxon>Synechococcales</taxon>
        <taxon>Synechococcaceae</taxon>
        <taxon>Synechococcus</taxon>
    </lineage>
</organism>